<accession>Q0VKU7</accession>
<reference key="1">
    <citation type="journal article" date="2006" name="Nat. Biotechnol.">
        <title>Genome sequence of the ubiquitous hydrocarbon-degrading marine bacterium Alcanivorax borkumensis.</title>
        <authorList>
            <person name="Schneiker S."/>
            <person name="Martins dos Santos V.A.P."/>
            <person name="Bartels D."/>
            <person name="Bekel T."/>
            <person name="Brecht M."/>
            <person name="Buhrmester J."/>
            <person name="Chernikova T.N."/>
            <person name="Denaro R."/>
            <person name="Ferrer M."/>
            <person name="Gertler C."/>
            <person name="Goesmann A."/>
            <person name="Golyshina O.V."/>
            <person name="Kaminski F."/>
            <person name="Khachane A.N."/>
            <person name="Lang S."/>
            <person name="Linke B."/>
            <person name="McHardy A.C."/>
            <person name="Meyer F."/>
            <person name="Nechitaylo T."/>
            <person name="Puehler A."/>
            <person name="Regenhardt D."/>
            <person name="Rupp O."/>
            <person name="Sabirova J.S."/>
            <person name="Selbitschka W."/>
            <person name="Yakimov M.M."/>
            <person name="Timmis K.N."/>
            <person name="Vorhoelter F.-J."/>
            <person name="Weidner S."/>
            <person name="Kaiser O."/>
            <person name="Golyshin P.N."/>
        </authorList>
    </citation>
    <scope>NUCLEOTIDE SEQUENCE [LARGE SCALE GENOMIC DNA]</scope>
    <source>
        <strain>ATCC 700651 / DSM 11573 / NCIMB 13689 / SK2</strain>
    </source>
</reference>
<evidence type="ECO:0000255" key="1">
    <source>
        <dbReference type="HAMAP-Rule" id="MF_01810"/>
    </source>
</evidence>
<evidence type="ECO:0000256" key="2">
    <source>
        <dbReference type="SAM" id="MobiDB-lite"/>
    </source>
</evidence>
<keyword id="KW-0997">Cell inner membrane</keyword>
<keyword id="KW-1003">Cell membrane</keyword>
<keyword id="KW-0143">Chaperone</keyword>
<keyword id="KW-0472">Membrane</keyword>
<keyword id="KW-0653">Protein transport</keyword>
<keyword id="KW-1185">Reference proteome</keyword>
<keyword id="KW-0812">Transmembrane</keyword>
<keyword id="KW-1133">Transmembrane helix</keyword>
<keyword id="KW-0813">Transport</keyword>
<feature type="chain" id="PRO_1000070053" description="Membrane protein insertase YidC">
    <location>
        <begin position="1"/>
        <end position="582"/>
    </location>
</feature>
<feature type="transmembrane region" description="Helical" evidence="1">
    <location>
        <begin position="3"/>
        <end position="23"/>
    </location>
</feature>
<feature type="transmembrane region" description="Helical" evidence="1">
    <location>
        <begin position="357"/>
        <end position="377"/>
    </location>
</feature>
<feature type="transmembrane region" description="Helical" evidence="1">
    <location>
        <begin position="394"/>
        <end position="414"/>
    </location>
</feature>
<feature type="transmembrane region" description="Helical" evidence="1">
    <location>
        <begin position="464"/>
        <end position="484"/>
    </location>
</feature>
<feature type="transmembrane region" description="Helical" evidence="1">
    <location>
        <begin position="495"/>
        <end position="515"/>
    </location>
</feature>
<feature type="transmembrane region" description="Helical" evidence="1">
    <location>
        <begin position="541"/>
        <end position="561"/>
    </location>
</feature>
<feature type="region of interest" description="Disordered" evidence="2">
    <location>
        <begin position="38"/>
        <end position="92"/>
    </location>
</feature>
<feature type="compositionally biased region" description="Low complexity" evidence="2">
    <location>
        <begin position="45"/>
        <end position="58"/>
    </location>
</feature>
<feature type="compositionally biased region" description="Polar residues" evidence="2">
    <location>
        <begin position="59"/>
        <end position="74"/>
    </location>
</feature>
<name>YIDC_ALCBS</name>
<organism>
    <name type="scientific">Alcanivorax borkumensis (strain ATCC 700651 / DSM 11573 / NCIMB 13689 / SK2)</name>
    <dbReference type="NCBI Taxonomy" id="393595"/>
    <lineage>
        <taxon>Bacteria</taxon>
        <taxon>Pseudomonadati</taxon>
        <taxon>Pseudomonadota</taxon>
        <taxon>Gammaproteobacteria</taxon>
        <taxon>Oceanospirillales</taxon>
        <taxon>Alcanivoracaceae</taxon>
        <taxon>Alcanivorax</taxon>
    </lineage>
</organism>
<sequence>MEIQRALVITGIAVVSYLMIQAWQRDYANTASPVPVEQVAEQGNSSSSDSADLPSVQSQTDNSIPSAQSDNDLPSVSPADIAQPTPSSQRIEVNTDVLRVEINPVGGDIVRLALPDYPKHVDTPDQPFVLMDQNSNGTYVAQSGLVGKNGTDSSKGRPHWNSAQQSYRLAEGDNELNVDLTLTQDSGAEIIKRYTFEKGSYLIRVSHIVRNNGSTPWTGALYGQIKRDGRDDPGLSKAGFAPMPTYLGAAYWSADKPYNKLTFDDMSEDDVKLDQTVEGGWLAMVQHYFVSAWIPDAKQKNHYSSVYLKSRDQYLLRFVSPNTTIQPGEESVLYSEFYAGPKQQDNLEAISPGLNMTVDYGWLWFISQPIFALLVFLQSGEVSVFGMDIDIGGGVGNWGVAIILLTLIIKAIFFKLSATSYRSMAKMRKVAPEMQRIKEQNKNDKQKQQMETMNLFKREKINPLGGCLPMLVQMPVFIALYYVLLESVELRQAPFFLWINDLSVMDPYFVLPILMGASMFLQTRLNPTPADPTQAQVMKWMPMIFAVFMLWFPAGLVLYWLTNNILSIAQQWIITRNIENSA</sequence>
<comment type="function">
    <text evidence="1">Required for the insertion and/or proper folding and/or complex formation of integral membrane proteins into the membrane. Involved in integration of membrane proteins that insert both dependently and independently of the Sec translocase complex, as well as at least some lipoproteins. Aids folding of multispanning membrane proteins.</text>
</comment>
<comment type="subunit">
    <text evidence="1">Interacts with the Sec translocase complex via SecD. Specifically interacts with transmembrane segments of nascent integral membrane proteins during membrane integration.</text>
</comment>
<comment type="subcellular location">
    <subcellularLocation>
        <location evidence="1">Cell inner membrane</location>
        <topology evidence="1">Multi-pass membrane protein</topology>
    </subcellularLocation>
</comment>
<comment type="similarity">
    <text evidence="1">Belongs to the OXA1/ALB3/YidC family. Type 1 subfamily.</text>
</comment>
<protein>
    <recommendedName>
        <fullName evidence="1">Membrane protein insertase YidC</fullName>
    </recommendedName>
    <alternativeName>
        <fullName evidence="1">Foldase YidC</fullName>
    </alternativeName>
    <alternativeName>
        <fullName evidence="1">Membrane integrase YidC</fullName>
    </alternativeName>
    <alternativeName>
        <fullName evidence="1">Membrane protein YidC</fullName>
    </alternativeName>
</protein>
<proteinExistence type="inferred from homology"/>
<gene>
    <name evidence="1" type="primary">yidC</name>
    <name type="ordered locus">ABO_2753</name>
</gene>
<dbReference type="EMBL" id="AM286690">
    <property type="protein sequence ID" value="CAL18201.1"/>
    <property type="molecule type" value="Genomic_DNA"/>
</dbReference>
<dbReference type="RefSeq" id="WP_011590023.1">
    <property type="nucleotide sequence ID" value="NC_008260.1"/>
</dbReference>
<dbReference type="SMR" id="Q0VKU7"/>
<dbReference type="STRING" id="393595.ABO_2753"/>
<dbReference type="KEGG" id="abo:ABO_2753"/>
<dbReference type="eggNOG" id="COG0706">
    <property type="taxonomic scope" value="Bacteria"/>
</dbReference>
<dbReference type="HOGENOM" id="CLU_016535_3_0_6"/>
<dbReference type="OrthoDB" id="9780552at2"/>
<dbReference type="Proteomes" id="UP000008871">
    <property type="component" value="Chromosome"/>
</dbReference>
<dbReference type="GO" id="GO:0005886">
    <property type="term" value="C:plasma membrane"/>
    <property type="evidence" value="ECO:0007669"/>
    <property type="project" value="UniProtKB-SubCell"/>
</dbReference>
<dbReference type="GO" id="GO:0032977">
    <property type="term" value="F:membrane insertase activity"/>
    <property type="evidence" value="ECO:0007669"/>
    <property type="project" value="InterPro"/>
</dbReference>
<dbReference type="GO" id="GO:0051205">
    <property type="term" value="P:protein insertion into membrane"/>
    <property type="evidence" value="ECO:0007669"/>
    <property type="project" value="TreeGrafter"/>
</dbReference>
<dbReference type="GO" id="GO:0015031">
    <property type="term" value="P:protein transport"/>
    <property type="evidence" value="ECO:0007669"/>
    <property type="project" value="UniProtKB-KW"/>
</dbReference>
<dbReference type="CDD" id="cd20070">
    <property type="entry name" value="5TM_YidC_Alb3"/>
    <property type="match status" value="1"/>
</dbReference>
<dbReference type="CDD" id="cd19961">
    <property type="entry name" value="EcYidC-like_peri"/>
    <property type="match status" value="1"/>
</dbReference>
<dbReference type="Gene3D" id="2.70.98.90">
    <property type="match status" value="1"/>
</dbReference>
<dbReference type="HAMAP" id="MF_01810">
    <property type="entry name" value="YidC_type1"/>
    <property type="match status" value="1"/>
</dbReference>
<dbReference type="InterPro" id="IPR019998">
    <property type="entry name" value="Membr_insert_YidC"/>
</dbReference>
<dbReference type="InterPro" id="IPR028053">
    <property type="entry name" value="Membr_insert_YidC_N"/>
</dbReference>
<dbReference type="InterPro" id="IPR001708">
    <property type="entry name" value="YidC/ALB3/OXA1/COX18"/>
</dbReference>
<dbReference type="InterPro" id="IPR028055">
    <property type="entry name" value="YidC/Oxa/ALB_C"/>
</dbReference>
<dbReference type="InterPro" id="IPR047196">
    <property type="entry name" value="YidC_ALB_C"/>
</dbReference>
<dbReference type="InterPro" id="IPR038221">
    <property type="entry name" value="YidC_periplasmic_sf"/>
</dbReference>
<dbReference type="NCBIfam" id="NF002352">
    <property type="entry name" value="PRK01318.1-3"/>
    <property type="match status" value="1"/>
</dbReference>
<dbReference type="NCBIfam" id="TIGR03593">
    <property type="entry name" value="yidC_nterm"/>
    <property type="match status" value="1"/>
</dbReference>
<dbReference type="NCBIfam" id="TIGR03592">
    <property type="entry name" value="yidC_oxa1_cterm"/>
    <property type="match status" value="1"/>
</dbReference>
<dbReference type="PANTHER" id="PTHR12428:SF65">
    <property type="entry name" value="CYTOCHROME C OXIDASE ASSEMBLY PROTEIN COX18, MITOCHONDRIAL"/>
    <property type="match status" value="1"/>
</dbReference>
<dbReference type="PANTHER" id="PTHR12428">
    <property type="entry name" value="OXA1"/>
    <property type="match status" value="1"/>
</dbReference>
<dbReference type="Pfam" id="PF02096">
    <property type="entry name" value="60KD_IMP"/>
    <property type="match status" value="1"/>
</dbReference>
<dbReference type="Pfam" id="PF14849">
    <property type="entry name" value="YidC_periplas"/>
    <property type="match status" value="1"/>
</dbReference>
<dbReference type="PRINTS" id="PR00701">
    <property type="entry name" value="60KDINNERMP"/>
</dbReference>
<dbReference type="PRINTS" id="PR01900">
    <property type="entry name" value="YIDCPROTEIN"/>
</dbReference>